<comment type="similarity">
    <text evidence="2">Belongs to the tobamoviruses movement protein family.</text>
</comment>
<name>MOVP_GVAIS</name>
<organismHost>
    <name type="scientific">Vitis vinifera</name>
    <name type="common">Grape</name>
    <dbReference type="NCBI Taxonomy" id="29760"/>
</organismHost>
<gene>
    <name type="ORF">ORF3</name>
</gene>
<keyword id="KW-1185">Reference proteome</keyword>
<keyword id="KW-0813">Transport</keyword>
<keyword id="KW-0916">Viral movement protein</keyword>
<protein>
    <recommendedName>
        <fullName>Movement protein</fullName>
        <shortName>MP</shortName>
    </recommendedName>
</protein>
<accession>Q67706</accession>
<evidence type="ECO:0000256" key="1">
    <source>
        <dbReference type="SAM" id="MobiDB-lite"/>
    </source>
</evidence>
<evidence type="ECO:0000305" key="2"/>
<feature type="chain" id="PRO_0000401095" description="Movement protein">
    <location>
        <begin position="1"/>
        <end position="278"/>
    </location>
</feature>
<feature type="region of interest" description="Disordered" evidence="1">
    <location>
        <begin position="256"/>
        <end position="278"/>
    </location>
</feature>
<feature type="compositionally biased region" description="Basic and acidic residues" evidence="1">
    <location>
        <begin position="259"/>
        <end position="271"/>
    </location>
</feature>
<reference key="1">
    <citation type="submission" date="2006-02" db="EMBL/GenBank/DDBJ databases">
        <authorList>
            <person name="Minafra A."/>
        </authorList>
    </citation>
    <scope>NUCLEOTIDE SEQUENCE [GENOMIC RNA]</scope>
</reference>
<sequence>MSQEGSLGTKASSFEPQDIKVFHVKRSTRDLETLNKSLHRGDVYNTELIEKVFPRRTKKCVIHKDVIVKDGRVDCDLDIMDEGLDDINEEEFPLYHVGCIVVALMPHGKNLQGKVSVEVLDTRLVDGASRISRTLMDMSKPLSACADFPGYFISTSDLLNGYTLHLSITTTDLQFVDGVHPFSVQLMSIGRFCGEDMKTRYAITETSKMLHQNILNTEGDGELIPRGVQVQKVPDTLVMPEVFETIKKFGLKTNGTLRQEGRDKGDNRRVGVGESPTN</sequence>
<organism>
    <name type="scientific">Grapevine virus A (isolate Is 151)</name>
    <name type="common">GVA</name>
    <dbReference type="NCBI Taxonomy" id="651358"/>
    <lineage>
        <taxon>Viruses</taxon>
        <taxon>Riboviria</taxon>
        <taxon>Orthornavirae</taxon>
        <taxon>Kitrinoviricota</taxon>
        <taxon>Alsuviricetes</taxon>
        <taxon>Tymovirales</taxon>
        <taxon>Betaflexiviridae</taxon>
        <taxon>Trivirinae</taxon>
        <taxon>Vitivirus</taxon>
        <taxon>Grapevine virus A</taxon>
    </lineage>
</organism>
<dbReference type="EMBL" id="X75433">
    <property type="protein sequence ID" value="CAA53184.1"/>
    <property type="molecule type" value="Genomic_RNA"/>
</dbReference>
<dbReference type="PIR" id="S44997">
    <property type="entry name" value="S44997"/>
</dbReference>
<dbReference type="RefSeq" id="NP_619664.1">
    <property type="nucleotide sequence ID" value="NC_003604.2"/>
</dbReference>
<dbReference type="GeneID" id="940188"/>
<dbReference type="KEGG" id="vg:940188"/>
<dbReference type="Proteomes" id="UP000000679">
    <property type="component" value="Segment"/>
</dbReference>
<dbReference type="GO" id="GO:0046740">
    <property type="term" value="P:transport of virus in host, cell to cell"/>
    <property type="evidence" value="ECO:0007669"/>
    <property type="project" value="UniProtKB-KW"/>
</dbReference>
<proteinExistence type="inferred from homology"/>